<accession>B5BC22</accession>
<keyword id="KW-0456">Lyase</keyword>
<keyword id="KW-0501">Molybdenum cofactor biosynthesis</keyword>
<protein>
    <recommendedName>
        <fullName evidence="1">Cyclic pyranopterin monophosphate synthase</fullName>
        <ecNumber evidence="1">4.6.1.17</ecNumber>
    </recommendedName>
    <alternativeName>
        <fullName evidence="1">Molybdenum cofactor biosynthesis protein C</fullName>
    </alternativeName>
</protein>
<evidence type="ECO:0000255" key="1">
    <source>
        <dbReference type="HAMAP-Rule" id="MF_01224"/>
    </source>
</evidence>
<proteinExistence type="inferred from homology"/>
<comment type="function">
    <text evidence="1">Catalyzes the conversion of (8S)-3',8-cyclo-7,8-dihydroguanosine 5'-triphosphate to cyclic pyranopterin monophosphate (cPMP).</text>
</comment>
<comment type="catalytic activity">
    <reaction evidence="1">
        <text>(8S)-3',8-cyclo-7,8-dihydroguanosine 5'-triphosphate = cyclic pyranopterin phosphate + diphosphate</text>
        <dbReference type="Rhea" id="RHEA:49580"/>
        <dbReference type="ChEBI" id="CHEBI:33019"/>
        <dbReference type="ChEBI" id="CHEBI:59648"/>
        <dbReference type="ChEBI" id="CHEBI:131766"/>
        <dbReference type="EC" id="4.6.1.17"/>
    </reaction>
</comment>
<comment type="pathway">
    <text evidence="1">Cofactor biosynthesis; molybdopterin biosynthesis.</text>
</comment>
<comment type="subunit">
    <text evidence="1">Homohexamer; trimer of dimers.</text>
</comment>
<comment type="similarity">
    <text evidence="1">Belongs to the MoaC family.</text>
</comment>
<sequence>MSQLTHINAAGEAHMVDVSAKAETVREARAEAFVTMRSETLAMIVDGKHHKGDVFATARIAGIQAAKRTWELIPLCHPLLLSKVEIQLQAEPEHNRVRIESLCRLTGKTGVEMEALTAASVAALTIYDMCKAVQKDMVIGPVRLLAKSGGKSGDFKVDAHD</sequence>
<name>MOAC_SALPK</name>
<organism>
    <name type="scientific">Salmonella paratyphi A (strain AKU_12601)</name>
    <dbReference type="NCBI Taxonomy" id="554290"/>
    <lineage>
        <taxon>Bacteria</taxon>
        <taxon>Pseudomonadati</taxon>
        <taxon>Pseudomonadota</taxon>
        <taxon>Gammaproteobacteria</taxon>
        <taxon>Enterobacterales</taxon>
        <taxon>Enterobacteriaceae</taxon>
        <taxon>Salmonella</taxon>
    </lineage>
</organism>
<gene>
    <name evidence="1" type="primary">moaC</name>
    <name type="ordered locus">SSPA1817</name>
</gene>
<dbReference type="EC" id="4.6.1.17" evidence="1"/>
<dbReference type="EMBL" id="FM200053">
    <property type="protein sequence ID" value="CAR60012.1"/>
    <property type="molecule type" value="Genomic_DNA"/>
</dbReference>
<dbReference type="RefSeq" id="WP_000080894.1">
    <property type="nucleotide sequence ID" value="NC_011147.1"/>
</dbReference>
<dbReference type="SMR" id="B5BC22"/>
<dbReference type="KEGG" id="sek:SSPA1817"/>
<dbReference type="HOGENOM" id="CLU_074693_1_1_6"/>
<dbReference type="UniPathway" id="UPA00344"/>
<dbReference type="Proteomes" id="UP000001869">
    <property type="component" value="Chromosome"/>
</dbReference>
<dbReference type="GO" id="GO:0061799">
    <property type="term" value="F:cyclic pyranopterin monophosphate synthase activity"/>
    <property type="evidence" value="ECO:0007669"/>
    <property type="project" value="UniProtKB-UniRule"/>
</dbReference>
<dbReference type="GO" id="GO:0006777">
    <property type="term" value="P:Mo-molybdopterin cofactor biosynthetic process"/>
    <property type="evidence" value="ECO:0007669"/>
    <property type="project" value="UniProtKB-UniRule"/>
</dbReference>
<dbReference type="CDD" id="cd01420">
    <property type="entry name" value="MoaC_PE"/>
    <property type="match status" value="1"/>
</dbReference>
<dbReference type="FunFam" id="3.30.70.640:FF:000001">
    <property type="entry name" value="Cyclic pyranopterin monophosphate synthase"/>
    <property type="match status" value="1"/>
</dbReference>
<dbReference type="Gene3D" id="3.30.70.640">
    <property type="entry name" value="Molybdopterin cofactor biosynthesis C (MoaC) domain"/>
    <property type="match status" value="1"/>
</dbReference>
<dbReference type="HAMAP" id="MF_01224_B">
    <property type="entry name" value="MoaC_B"/>
    <property type="match status" value="1"/>
</dbReference>
<dbReference type="InterPro" id="IPR023045">
    <property type="entry name" value="MoaC"/>
</dbReference>
<dbReference type="InterPro" id="IPR047594">
    <property type="entry name" value="MoaC_bact/euk"/>
</dbReference>
<dbReference type="InterPro" id="IPR036522">
    <property type="entry name" value="MoaC_sf"/>
</dbReference>
<dbReference type="InterPro" id="IPR050105">
    <property type="entry name" value="MoCo_biosynth_MoaA/MoaC"/>
</dbReference>
<dbReference type="InterPro" id="IPR002820">
    <property type="entry name" value="Mopterin_CF_biosynth-C_dom"/>
</dbReference>
<dbReference type="NCBIfam" id="TIGR00581">
    <property type="entry name" value="moaC"/>
    <property type="match status" value="1"/>
</dbReference>
<dbReference type="NCBIfam" id="NF006870">
    <property type="entry name" value="PRK09364.1"/>
    <property type="match status" value="1"/>
</dbReference>
<dbReference type="PANTHER" id="PTHR22960">
    <property type="entry name" value="MOLYBDOPTERIN COFACTOR SYNTHESIS PROTEIN A"/>
    <property type="match status" value="1"/>
</dbReference>
<dbReference type="Pfam" id="PF01967">
    <property type="entry name" value="MoaC"/>
    <property type="match status" value="1"/>
</dbReference>
<dbReference type="SUPFAM" id="SSF55040">
    <property type="entry name" value="Molybdenum cofactor biosynthesis protein C, MoaC"/>
    <property type="match status" value="1"/>
</dbReference>
<feature type="chain" id="PRO_1000139295" description="Cyclic pyranopterin monophosphate synthase">
    <location>
        <begin position="1"/>
        <end position="161"/>
    </location>
</feature>
<feature type="active site" evidence="1">
    <location>
        <position position="128"/>
    </location>
</feature>
<feature type="binding site" evidence="1">
    <location>
        <begin position="75"/>
        <end position="77"/>
    </location>
    <ligand>
        <name>substrate</name>
    </ligand>
</feature>
<feature type="binding site" evidence="1">
    <location>
        <begin position="113"/>
        <end position="114"/>
    </location>
    <ligand>
        <name>substrate</name>
    </ligand>
</feature>
<reference key="1">
    <citation type="journal article" date="2009" name="BMC Genomics">
        <title>Pseudogene accumulation in the evolutionary histories of Salmonella enterica serovars Paratyphi A and Typhi.</title>
        <authorList>
            <person name="Holt K.E."/>
            <person name="Thomson N.R."/>
            <person name="Wain J."/>
            <person name="Langridge G.C."/>
            <person name="Hasan R."/>
            <person name="Bhutta Z.A."/>
            <person name="Quail M.A."/>
            <person name="Norbertczak H."/>
            <person name="Walker D."/>
            <person name="Simmonds M."/>
            <person name="White B."/>
            <person name="Bason N."/>
            <person name="Mungall K."/>
            <person name="Dougan G."/>
            <person name="Parkhill J."/>
        </authorList>
    </citation>
    <scope>NUCLEOTIDE SEQUENCE [LARGE SCALE GENOMIC DNA]</scope>
    <source>
        <strain>AKU_12601</strain>
    </source>
</reference>